<dbReference type="EC" id="5.6.1.7" evidence="1"/>
<dbReference type="EMBL" id="CP000896">
    <property type="protein sequence ID" value="ABX81846.1"/>
    <property type="molecule type" value="Genomic_DNA"/>
</dbReference>
<dbReference type="RefSeq" id="WP_012243177.1">
    <property type="nucleotide sequence ID" value="NC_010163.1"/>
</dbReference>
<dbReference type="SMR" id="A9NHL6"/>
<dbReference type="STRING" id="441768.ACL_1247"/>
<dbReference type="GeneID" id="41339384"/>
<dbReference type="KEGG" id="acl:ACL_1247"/>
<dbReference type="eggNOG" id="COG0459">
    <property type="taxonomic scope" value="Bacteria"/>
</dbReference>
<dbReference type="HOGENOM" id="CLU_016503_3_0_14"/>
<dbReference type="OrthoDB" id="9766614at2"/>
<dbReference type="Proteomes" id="UP000008558">
    <property type="component" value="Chromosome"/>
</dbReference>
<dbReference type="GO" id="GO:0005737">
    <property type="term" value="C:cytoplasm"/>
    <property type="evidence" value="ECO:0007669"/>
    <property type="project" value="UniProtKB-SubCell"/>
</dbReference>
<dbReference type="GO" id="GO:0005524">
    <property type="term" value="F:ATP binding"/>
    <property type="evidence" value="ECO:0007669"/>
    <property type="project" value="UniProtKB-UniRule"/>
</dbReference>
<dbReference type="GO" id="GO:0140662">
    <property type="term" value="F:ATP-dependent protein folding chaperone"/>
    <property type="evidence" value="ECO:0007669"/>
    <property type="project" value="InterPro"/>
</dbReference>
<dbReference type="GO" id="GO:0016853">
    <property type="term" value="F:isomerase activity"/>
    <property type="evidence" value="ECO:0007669"/>
    <property type="project" value="UniProtKB-KW"/>
</dbReference>
<dbReference type="GO" id="GO:0051082">
    <property type="term" value="F:unfolded protein binding"/>
    <property type="evidence" value="ECO:0007669"/>
    <property type="project" value="UniProtKB-UniRule"/>
</dbReference>
<dbReference type="GO" id="GO:0042026">
    <property type="term" value="P:protein refolding"/>
    <property type="evidence" value="ECO:0007669"/>
    <property type="project" value="UniProtKB-UniRule"/>
</dbReference>
<dbReference type="CDD" id="cd03344">
    <property type="entry name" value="GroEL"/>
    <property type="match status" value="1"/>
</dbReference>
<dbReference type="FunFam" id="3.50.7.10:FF:000001">
    <property type="entry name" value="60 kDa chaperonin"/>
    <property type="match status" value="1"/>
</dbReference>
<dbReference type="Gene3D" id="3.50.7.10">
    <property type="entry name" value="GroEL"/>
    <property type="match status" value="1"/>
</dbReference>
<dbReference type="Gene3D" id="1.10.560.10">
    <property type="entry name" value="GroEL-like equatorial domain"/>
    <property type="match status" value="1"/>
</dbReference>
<dbReference type="Gene3D" id="3.30.260.10">
    <property type="entry name" value="TCP-1-like chaperonin intermediate domain"/>
    <property type="match status" value="1"/>
</dbReference>
<dbReference type="HAMAP" id="MF_00600">
    <property type="entry name" value="CH60"/>
    <property type="match status" value="1"/>
</dbReference>
<dbReference type="InterPro" id="IPR001844">
    <property type="entry name" value="Cpn60/GroEL"/>
</dbReference>
<dbReference type="InterPro" id="IPR002423">
    <property type="entry name" value="Cpn60/GroEL/TCP-1"/>
</dbReference>
<dbReference type="InterPro" id="IPR027409">
    <property type="entry name" value="GroEL-like_apical_dom_sf"/>
</dbReference>
<dbReference type="InterPro" id="IPR027413">
    <property type="entry name" value="GROEL-like_equatorial_sf"/>
</dbReference>
<dbReference type="InterPro" id="IPR027410">
    <property type="entry name" value="TCP-1-like_intermed_sf"/>
</dbReference>
<dbReference type="NCBIfam" id="TIGR02348">
    <property type="entry name" value="GroEL"/>
    <property type="match status" value="1"/>
</dbReference>
<dbReference type="NCBIfam" id="NF000592">
    <property type="entry name" value="PRK00013.1"/>
    <property type="match status" value="1"/>
</dbReference>
<dbReference type="NCBIfam" id="NF009487">
    <property type="entry name" value="PRK12849.1"/>
    <property type="match status" value="1"/>
</dbReference>
<dbReference type="NCBIfam" id="NF009488">
    <property type="entry name" value="PRK12850.1"/>
    <property type="match status" value="1"/>
</dbReference>
<dbReference type="NCBIfam" id="NF009489">
    <property type="entry name" value="PRK12851.1"/>
    <property type="match status" value="1"/>
</dbReference>
<dbReference type="PANTHER" id="PTHR45633">
    <property type="entry name" value="60 KDA HEAT SHOCK PROTEIN, MITOCHONDRIAL"/>
    <property type="match status" value="1"/>
</dbReference>
<dbReference type="Pfam" id="PF00118">
    <property type="entry name" value="Cpn60_TCP1"/>
    <property type="match status" value="1"/>
</dbReference>
<dbReference type="PRINTS" id="PR00298">
    <property type="entry name" value="CHAPERONIN60"/>
</dbReference>
<dbReference type="SUPFAM" id="SSF52029">
    <property type="entry name" value="GroEL apical domain-like"/>
    <property type="match status" value="1"/>
</dbReference>
<dbReference type="SUPFAM" id="SSF48592">
    <property type="entry name" value="GroEL equatorial domain-like"/>
    <property type="match status" value="1"/>
</dbReference>
<dbReference type="SUPFAM" id="SSF54849">
    <property type="entry name" value="GroEL-intermediate domain like"/>
    <property type="match status" value="2"/>
</dbReference>
<feature type="chain" id="PRO_1000082460" description="Chaperonin GroEL">
    <location>
        <begin position="1"/>
        <end position="536"/>
    </location>
</feature>
<feature type="binding site" evidence="1">
    <location>
        <begin position="29"/>
        <end position="32"/>
    </location>
    <ligand>
        <name>ATP</name>
        <dbReference type="ChEBI" id="CHEBI:30616"/>
    </ligand>
</feature>
<feature type="binding site" evidence="1">
    <location>
        <begin position="86"/>
        <end position="90"/>
    </location>
    <ligand>
        <name>ATP</name>
        <dbReference type="ChEBI" id="CHEBI:30616"/>
    </ligand>
</feature>
<feature type="binding site" evidence="1">
    <location>
        <position position="413"/>
    </location>
    <ligand>
        <name>ATP</name>
        <dbReference type="ChEBI" id="CHEBI:30616"/>
    </ligand>
</feature>
<feature type="binding site" evidence="1">
    <location>
        <position position="494"/>
    </location>
    <ligand>
        <name>ATP</name>
        <dbReference type="ChEBI" id="CHEBI:30616"/>
    </ligand>
</feature>
<reference key="1">
    <citation type="journal article" date="2011" name="J. Bacteriol.">
        <title>Complete genome and proteome of Acholeplasma laidlawii.</title>
        <authorList>
            <person name="Lazarev V.N."/>
            <person name="Levitskii S.A."/>
            <person name="Basovskii Y.I."/>
            <person name="Chukin M.M."/>
            <person name="Akopian T.A."/>
            <person name="Vereshchagin V.V."/>
            <person name="Kostrjukova E.S."/>
            <person name="Kovaleva G.Y."/>
            <person name="Kazanov M.D."/>
            <person name="Malko D.B."/>
            <person name="Vitreschak A.G."/>
            <person name="Sernova N.V."/>
            <person name="Gelfand M.S."/>
            <person name="Demina I.A."/>
            <person name="Serebryakova M.V."/>
            <person name="Galyamina M.A."/>
            <person name="Vtyurin N.N."/>
            <person name="Rogov S.I."/>
            <person name="Alexeev D.G."/>
            <person name="Ladygina V.G."/>
            <person name="Govorun V.M."/>
        </authorList>
    </citation>
    <scope>NUCLEOTIDE SEQUENCE [LARGE SCALE GENOMIC DNA]</scope>
    <source>
        <strain>PG-8A</strain>
    </source>
</reference>
<evidence type="ECO:0000255" key="1">
    <source>
        <dbReference type="HAMAP-Rule" id="MF_00600"/>
    </source>
</evidence>
<gene>
    <name evidence="1" type="primary">groEL</name>
    <name evidence="1" type="synonym">groL</name>
    <name type="ordered locus">ACL_1247</name>
</gene>
<sequence length="536" mass="58267">MSKEIRYGKDAKQSLLKGVDLLANTVKITLGPKGRNVVLDKGYGSPLITNDGVSIAKEIELKDPYENMGAKLLYEVASKTNDVAGDGTTTATLLAQSIIHKGFKAVDNGANPVLVREGILRAGKEVSQKLLEKSRPVETSEDIENVASISASSREIGKIIAEAMDKVSKNGVISVDESKGFETELEVVEGMQYDKGYISPYFVSDRETMTVELENPHVLVTDQKISTIQDILPILEQVVKANKPLLIIADDIENEVTSTLILNKLRGTFNVVATKAPGFGDNQKDMLNDIAILTGATFYAKDLQMKLQEIKLEDLGLVQKAVVKKDTTTLIGGHGTKDAIDKRILEIEAQINSSTSDYDKKRLQERLAKLAGGVAIIKVGAATEAELKEKKLRIEDALNATKAAILEGIVAGGGSVLVDIQTELKETLKDSHIDIYKGILAVLDSLSEPLYQIAENAGFDGQDILTEQRKQNKNYGFDAKEGKWVNMLKEGIIDPTKVTRNAILNASSIGALMITSEAAVVEIKDKDQNIPTQPMY</sequence>
<name>CH60_ACHLI</name>
<protein>
    <recommendedName>
        <fullName evidence="1">Chaperonin GroEL</fullName>
        <ecNumber evidence="1">5.6.1.7</ecNumber>
    </recommendedName>
    <alternativeName>
        <fullName evidence="1">60 kDa chaperonin</fullName>
    </alternativeName>
    <alternativeName>
        <fullName evidence="1">Chaperonin-60</fullName>
        <shortName evidence="1">Cpn60</shortName>
    </alternativeName>
</protein>
<accession>A9NHL6</accession>
<comment type="function">
    <text evidence="1">Together with its co-chaperonin GroES, plays an essential role in assisting protein folding. The GroEL-GroES system forms a nano-cage that allows encapsulation of the non-native substrate proteins and provides a physical environment optimized to promote and accelerate protein folding.</text>
</comment>
<comment type="catalytic activity">
    <reaction evidence="1">
        <text>ATP + H2O + a folded polypeptide = ADP + phosphate + an unfolded polypeptide.</text>
        <dbReference type="EC" id="5.6.1.7"/>
    </reaction>
</comment>
<comment type="subunit">
    <text evidence="1">Forms a cylinder of 14 subunits composed of two heptameric rings stacked back-to-back. Interacts with the co-chaperonin GroES.</text>
</comment>
<comment type="subcellular location">
    <subcellularLocation>
        <location evidence="1">Cytoplasm</location>
    </subcellularLocation>
</comment>
<comment type="similarity">
    <text evidence="1">Belongs to the chaperonin (HSP60) family.</text>
</comment>
<organism>
    <name type="scientific">Acholeplasma laidlawii (strain PG-8A)</name>
    <dbReference type="NCBI Taxonomy" id="441768"/>
    <lineage>
        <taxon>Bacteria</taxon>
        <taxon>Bacillati</taxon>
        <taxon>Mycoplasmatota</taxon>
        <taxon>Mollicutes</taxon>
        <taxon>Acholeplasmatales</taxon>
        <taxon>Acholeplasmataceae</taxon>
        <taxon>Acholeplasma</taxon>
    </lineage>
</organism>
<keyword id="KW-0067">ATP-binding</keyword>
<keyword id="KW-0143">Chaperone</keyword>
<keyword id="KW-0963">Cytoplasm</keyword>
<keyword id="KW-0413">Isomerase</keyword>
<keyword id="KW-0547">Nucleotide-binding</keyword>
<keyword id="KW-1185">Reference proteome</keyword>
<proteinExistence type="inferred from homology"/>